<reference key="1">
    <citation type="journal article" date="2005" name="J. Bacteriol.">
        <title>Insights on evolution of virulence and resistance from the complete genome analysis of an early methicillin-resistant Staphylococcus aureus strain and a biofilm-producing methicillin-resistant Staphylococcus epidermidis strain.</title>
        <authorList>
            <person name="Gill S.R."/>
            <person name="Fouts D.E."/>
            <person name="Archer G.L."/>
            <person name="Mongodin E.F."/>
            <person name="DeBoy R.T."/>
            <person name="Ravel J."/>
            <person name="Paulsen I.T."/>
            <person name="Kolonay J.F."/>
            <person name="Brinkac L.M."/>
            <person name="Beanan M.J."/>
            <person name="Dodson R.J."/>
            <person name="Daugherty S.C."/>
            <person name="Madupu R."/>
            <person name="Angiuoli S.V."/>
            <person name="Durkin A.S."/>
            <person name="Haft D.H."/>
            <person name="Vamathevan J.J."/>
            <person name="Khouri H."/>
            <person name="Utterback T.R."/>
            <person name="Lee C."/>
            <person name="Dimitrov G."/>
            <person name="Jiang L."/>
            <person name="Qin H."/>
            <person name="Weidman J."/>
            <person name="Tran K."/>
            <person name="Kang K.H."/>
            <person name="Hance I.R."/>
            <person name="Nelson K.E."/>
            <person name="Fraser C.M."/>
        </authorList>
    </citation>
    <scope>NUCLEOTIDE SEQUENCE [LARGE SCALE GENOMIC DNA]</scope>
    <source>
        <strain>ATCC 35984 / DSM 28319 / BCRC 17069 / CCUG 31568 / BM 3577 / RP62A</strain>
    </source>
</reference>
<comment type="function">
    <text evidence="1">Component of the acetyl coenzyme A carboxylase (ACC) complex. Biotin carboxylase (BC) catalyzes the carboxylation of biotin on its carrier protein (BCCP) and then the CO(2) group is transferred by the transcarboxylase to acetyl-CoA to form malonyl-CoA.</text>
</comment>
<comment type="catalytic activity">
    <reaction evidence="1">
        <text>N(6)-carboxybiotinyl-L-lysyl-[protein] + acetyl-CoA = N(6)-biotinyl-L-lysyl-[protein] + malonyl-CoA</text>
        <dbReference type="Rhea" id="RHEA:54728"/>
        <dbReference type="Rhea" id="RHEA-COMP:10505"/>
        <dbReference type="Rhea" id="RHEA-COMP:10506"/>
        <dbReference type="ChEBI" id="CHEBI:57288"/>
        <dbReference type="ChEBI" id="CHEBI:57384"/>
        <dbReference type="ChEBI" id="CHEBI:83144"/>
        <dbReference type="ChEBI" id="CHEBI:83145"/>
        <dbReference type="EC" id="2.1.3.15"/>
    </reaction>
</comment>
<comment type="cofactor">
    <cofactor evidence="1">
        <name>Zn(2+)</name>
        <dbReference type="ChEBI" id="CHEBI:29105"/>
    </cofactor>
    <text evidence="1">Binds 1 zinc ion per subunit.</text>
</comment>
<comment type="pathway">
    <text evidence="1">Lipid metabolism; malonyl-CoA biosynthesis; malonyl-CoA from acetyl-CoA: step 1/1.</text>
</comment>
<comment type="subunit">
    <text evidence="1">Acetyl-CoA carboxylase is a heterohexamer composed of biotin carboxyl carrier protein (AccB), biotin carboxylase (AccC) and two subunits each of ACCase subunit alpha (AccA) and ACCase subunit beta (AccD).</text>
</comment>
<comment type="subcellular location">
    <subcellularLocation>
        <location evidence="1">Cytoplasm</location>
    </subcellularLocation>
</comment>
<comment type="similarity">
    <text evidence="1">Belongs to the AccD/PCCB family.</text>
</comment>
<protein>
    <recommendedName>
        <fullName evidence="1">Acetyl-coenzyme A carboxylase carboxyl transferase subunit beta</fullName>
        <shortName evidence="1">ACCase subunit beta</shortName>
        <shortName evidence="1">Acetyl-CoA carboxylase carboxyltransferase subunit beta</shortName>
        <ecNumber evidence="1">2.1.3.15</ecNumber>
    </recommendedName>
</protein>
<proteinExistence type="inferred from homology"/>
<sequence length="285" mass="31853">MFKDFFNRSKKKKYLTVQDSKQNDVPAGIMTKCPNCKKIMYTKELNENLNVCFNCDHHIALTAYKRIEAISDDGSFIEFDRGMTSANPLDFPGYEEKIEKDQQKTGLNEALVSGTAKLDGIQYGVAVMDARFRMGSMGSVVGEKICRIIDYCTEHRLPFILFSASGGARMQEGIISLMQMGKTSVSLKRHSDAGLLYISYITNPTTGGVSASFASVGDINLSEPKALIGFAGRRVIEQTINEKLPDDFQTAEFLLEHGQLDKVIHRKDMRETLSNILKIHQEVSN</sequence>
<name>ACCD_STAEQ</name>
<dbReference type="EC" id="2.1.3.15" evidence="1"/>
<dbReference type="EMBL" id="CP000029">
    <property type="protein sequence ID" value="AAW54652.1"/>
    <property type="molecule type" value="Genomic_DNA"/>
</dbReference>
<dbReference type="RefSeq" id="WP_002440197.1">
    <property type="nucleotide sequence ID" value="NC_002976.3"/>
</dbReference>
<dbReference type="SMR" id="Q5HNK4"/>
<dbReference type="STRING" id="176279.SERP1264"/>
<dbReference type="GeneID" id="50018510"/>
<dbReference type="KEGG" id="ser:SERP1264"/>
<dbReference type="eggNOG" id="COG0777">
    <property type="taxonomic scope" value="Bacteria"/>
</dbReference>
<dbReference type="HOGENOM" id="CLU_015486_1_0_9"/>
<dbReference type="UniPathway" id="UPA00655">
    <property type="reaction ID" value="UER00711"/>
</dbReference>
<dbReference type="Proteomes" id="UP000000531">
    <property type="component" value="Chromosome"/>
</dbReference>
<dbReference type="GO" id="GO:0009317">
    <property type="term" value="C:acetyl-CoA carboxylase complex"/>
    <property type="evidence" value="ECO:0007669"/>
    <property type="project" value="InterPro"/>
</dbReference>
<dbReference type="GO" id="GO:0003989">
    <property type="term" value="F:acetyl-CoA carboxylase activity"/>
    <property type="evidence" value="ECO:0007669"/>
    <property type="project" value="InterPro"/>
</dbReference>
<dbReference type="GO" id="GO:0005524">
    <property type="term" value="F:ATP binding"/>
    <property type="evidence" value="ECO:0007669"/>
    <property type="project" value="UniProtKB-KW"/>
</dbReference>
<dbReference type="GO" id="GO:0016743">
    <property type="term" value="F:carboxyl- or carbamoyltransferase activity"/>
    <property type="evidence" value="ECO:0007669"/>
    <property type="project" value="UniProtKB-UniRule"/>
</dbReference>
<dbReference type="GO" id="GO:0008270">
    <property type="term" value="F:zinc ion binding"/>
    <property type="evidence" value="ECO:0007669"/>
    <property type="project" value="UniProtKB-UniRule"/>
</dbReference>
<dbReference type="GO" id="GO:0006633">
    <property type="term" value="P:fatty acid biosynthetic process"/>
    <property type="evidence" value="ECO:0007669"/>
    <property type="project" value="UniProtKB-KW"/>
</dbReference>
<dbReference type="GO" id="GO:2001295">
    <property type="term" value="P:malonyl-CoA biosynthetic process"/>
    <property type="evidence" value="ECO:0007669"/>
    <property type="project" value="UniProtKB-UniRule"/>
</dbReference>
<dbReference type="Gene3D" id="3.90.226.10">
    <property type="entry name" value="2-enoyl-CoA Hydratase, Chain A, domain 1"/>
    <property type="match status" value="1"/>
</dbReference>
<dbReference type="HAMAP" id="MF_01395">
    <property type="entry name" value="AcetylCoA_CT_beta"/>
    <property type="match status" value="1"/>
</dbReference>
<dbReference type="InterPro" id="IPR034733">
    <property type="entry name" value="AcCoA_carboxyl_beta"/>
</dbReference>
<dbReference type="InterPro" id="IPR000438">
    <property type="entry name" value="Acetyl_CoA_COase_Trfase_b_su"/>
</dbReference>
<dbReference type="InterPro" id="IPR029045">
    <property type="entry name" value="ClpP/crotonase-like_dom_sf"/>
</dbReference>
<dbReference type="InterPro" id="IPR011762">
    <property type="entry name" value="COA_CT_N"/>
</dbReference>
<dbReference type="InterPro" id="IPR041010">
    <property type="entry name" value="Znf-ACC"/>
</dbReference>
<dbReference type="NCBIfam" id="TIGR00515">
    <property type="entry name" value="accD"/>
    <property type="match status" value="1"/>
</dbReference>
<dbReference type="PANTHER" id="PTHR42995">
    <property type="entry name" value="ACETYL-COENZYME A CARBOXYLASE CARBOXYL TRANSFERASE SUBUNIT BETA, CHLOROPLASTIC"/>
    <property type="match status" value="1"/>
</dbReference>
<dbReference type="PANTHER" id="PTHR42995:SF5">
    <property type="entry name" value="ACETYL-COENZYME A CARBOXYLASE CARBOXYL TRANSFERASE SUBUNIT BETA, CHLOROPLASTIC"/>
    <property type="match status" value="1"/>
</dbReference>
<dbReference type="Pfam" id="PF01039">
    <property type="entry name" value="Carboxyl_trans"/>
    <property type="match status" value="1"/>
</dbReference>
<dbReference type="Pfam" id="PF17848">
    <property type="entry name" value="Zn_ribbon_ACC"/>
    <property type="match status" value="1"/>
</dbReference>
<dbReference type="PRINTS" id="PR01070">
    <property type="entry name" value="ACCCTRFRASEB"/>
</dbReference>
<dbReference type="SUPFAM" id="SSF52096">
    <property type="entry name" value="ClpP/crotonase"/>
    <property type="match status" value="1"/>
</dbReference>
<dbReference type="PROSITE" id="PS50980">
    <property type="entry name" value="COA_CT_NTER"/>
    <property type="match status" value="1"/>
</dbReference>
<keyword id="KW-0067">ATP-binding</keyword>
<keyword id="KW-0963">Cytoplasm</keyword>
<keyword id="KW-0275">Fatty acid biosynthesis</keyword>
<keyword id="KW-0276">Fatty acid metabolism</keyword>
<keyword id="KW-0444">Lipid biosynthesis</keyword>
<keyword id="KW-0443">Lipid metabolism</keyword>
<keyword id="KW-0479">Metal-binding</keyword>
<keyword id="KW-0547">Nucleotide-binding</keyword>
<keyword id="KW-1185">Reference proteome</keyword>
<keyword id="KW-0808">Transferase</keyword>
<keyword id="KW-0862">Zinc</keyword>
<keyword id="KW-0863">Zinc-finger</keyword>
<feature type="chain" id="PRO_0000389863" description="Acetyl-coenzyme A carboxylase carboxyl transferase subunit beta">
    <location>
        <begin position="1"/>
        <end position="285"/>
    </location>
</feature>
<feature type="domain" description="CoA carboxyltransferase N-terminal" evidence="2">
    <location>
        <begin position="29"/>
        <end position="285"/>
    </location>
</feature>
<feature type="zinc finger region" description="C4-type" evidence="1">
    <location>
        <begin position="33"/>
        <end position="55"/>
    </location>
</feature>
<feature type="binding site" evidence="1">
    <location>
        <position position="33"/>
    </location>
    <ligand>
        <name>Zn(2+)</name>
        <dbReference type="ChEBI" id="CHEBI:29105"/>
    </ligand>
</feature>
<feature type="binding site" evidence="1">
    <location>
        <position position="36"/>
    </location>
    <ligand>
        <name>Zn(2+)</name>
        <dbReference type="ChEBI" id="CHEBI:29105"/>
    </ligand>
</feature>
<feature type="binding site" evidence="1">
    <location>
        <position position="52"/>
    </location>
    <ligand>
        <name>Zn(2+)</name>
        <dbReference type="ChEBI" id="CHEBI:29105"/>
    </ligand>
</feature>
<feature type="binding site" evidence="1">
    <location>
        <position position="55"/>
    </location>
    <ligand>
        <name>Zn(2+)</name>
        <dbReference type="ChEBI" id="CHEBI:29105"/>
    </ligand>
</feature>
<gene>
    <name evidence="1" type="primary">accD</name>
    <name type="ordered locus">SERP1264</name>
</gene>
<accession>Q5HNK4</accession>
<organism>
    <name type="scientific">Staphylococcus epidermidis (strain ATCC 35984 / DSM 28319 / BCRC 17069 / CCUG 31568 / BM 3577 / RP62A)</name>
    <dbReference type="NCBI Taxonomy" id="176279"/>
    <lineage>
        <taxon>Bacteria</taxon>
        <taxon>Bacillati</taxon>
        <taxon>Bacillota</taxon>
        <taxon>Bacilli</taxon>
        <taxon>Bacillales</taxon>
        <taxon>Staphylococcaceae</taxon>
        <taxon>Staphylococcus</taxon>
    </lineage>
</organism>
<evidence type="ECO:0000255" key="1">
    <source>
        <dbReference type="HAMAP-Rule" id="MF_01395"/>
    </source>
</evidence>
<evidence type="ECO:0000255" key="2">
    <source>
        <dbReference type="PROSITE-ProRule" id="PRU01136"/>
    </source>
</evidence>